<evidence type="ECO:0000250" key="1"/>
<evidence type="ECO:0000255" key="2">
    <source>
        <dbReference type="HAMAP-Rule" id="MF_00118"/>
    </source>
</evidence>
<accession>Q039K9</accession>
<keyword id="KW-0963">Cytoplasm</keyword>
<keyword id="KW-0251">Elongation factor</keyword>
<keyword id="KW-0342">GTP-binding</keyword>
<keyword id="KW-0378">Hydrolase</keyword>
<keyword id="KW-0460">Magnesium</keyword>
<keyword id="KW-0479">Metal-binding</keyword>
<keyword id="KW-0547">Nucleotide-binding</keyword>
<keyword id="KW-0648">Protein biosynthesis</keyword>
<keyword id="KW-1185">Reference proteome</keyword>
<sequence>MAEKEHYERTKPHVNIGTIGHVDHGKTTLTAAITKVLSEKGLAKAQDYASIDAAPEEKERGITINTAHVEYETEKRHYAHIDAPGHADYVKNMITGAAQMDGAILVVAATDGPMPQTREHILLARQVGVDYIVVFLNKTDLVDDPELIDLVEMEVRELLSEYDYPGDDIPVIRGSALKALEGDPEQEKVIMELMDTIDEYIPTPVRETDKPFLMPVEDVFTITGRGTVASGRIDRGTVKIGDEVEIIGLKPDVIKSTVTGLEMFRKTLDLGEAGDNVGVLLRGVNREQVERGQVLAKPGSIQLHNKFKGEVYILTKEEGGRHTPFFSNYRPQFYFHTTDVTGVIELPDGVEMVMPGDNVTFEVDLIAPVAIEKGTKFTVREGGRTVGAGVVSEILD</sequence>
<feature type="chain" id="PRO_0000337413" description="Elongation factor Tu">
    <location>
        <begin position="1"/>
        <end position="396"/>
    </location>
</feature>
<feature type="domain" description="tr-type G">
    <location>
        <begin position="11"/>
        <end position="205"/>
    </location>
</feature>
<feature type="region of interest" description="G1" evidence="1">
    <location>
        <begin position="20"/>
        <end position="27"/>
    </location>
</feature>
<feature type="region of interest" description="G2" evidence="1">
    <location>
        <begin position="61"/>
        <end position="65"/>
    </location>
</feature>
<feature type="region of interest" description="G3" evidence="1">
    <location>
        <begin position="82"/>
        <end position="85"/>
    </location>
</feature>
<feature type="region of interest" description="G4" evidence="1">
    <location>
        <begin position="137"/>
        <end position="140"/>
    </location>
</feature>
<feature type="region of interest" description="G5" evidence="1">
    <location>
        <begin position="175"/>
        <end position="177"/>
    </location>
</feature>
<feature type="binding site" evidence="2">
    <location>
        <begin position="20"/>
        <end position="27"/>
    </location>
    <ligand>
        <name>GTP</name>
        <dbReference type="ChEBI" id="CHEBI:37565"/>
    </ligand>
</feature>
<feature type="binding site" evidence="2">
    <location>
        <position position="27"/>
    </location>
    <ligand>
        <name>Mg(2+)</name>
        <dbReference type="ChEBI" id="CHEBI:18420"/>
    </ligand>
</feature>
<feature type="binding site" evidence="2">
    <location>
        <begin position="82"/>
        <end position="86"/>
    </location>
    <ligand>
        <name>GTP</name>
        <dbReference type="ChEBI" id="CHEBI:37565"/>
    </ligand>
</feature>
<feature type="binding site" evidence="2">
    <location>
        <begin position="137"/>
        <end position="140"/>
    </location>
    <ligand>
        <name>GTP</name>
        <dbReference type="ChEBI" id="CHEBI:37565"/>
    </ligand>
</feature>
<gene>
    <name evidence="2" type="primary">tuf</name>
    <name type="ordered locus">LSEI_1332</name>
</gene>
<protein>
    <recommendedName>
        <fullName evidence="2">Elongation factor Tu</fullName>
        <shortName evidence="2">EF-Tu</shortName>
        <ecNumber evidence="2">3.6.5.3</ecNumber>
    </recommendedName>
</protein>
<name>EFTU_LACP3</name>
<reference key="1">
    <citation type="journal article" date="2006" name="Proc. Natl. Acad. Sci. U.S.A.">
        <title>Comparative genomics of the lactic acid bacteria.</title>
        <authorList>
            <person name="Makarova K.S."/>
            <person name="Slesarev A."/>
            <person name="Wolf Y.I."/>
            <person name="Sorokin A."/>
            <person name="Mirkin B."/>
            <person name="Koonin E.V."/>
            <person name="Pavlov A."/>
            <person name="Pavlova N."/>
            <person name="Karamychev V."/>
            <person name="Polouchine N."/>
            <person name="Shakhova V."/>
            <person name="Grigoriev I."/>
            <person name="Lou Y."/>
            <person name="Rohksar D."/>
            <person name="Lucas S."/>
            <person name="Huang K."/>
            <person name="Goodstein D.M."/>
            <person name="Hawkins T."/>
            <person name="Plengvidhya V."/>
            <person name="Welker D."/>
            <person name="Hughes J."/>
            <person name="Goh Y."/>
            <person name="Benson A."/>
            <person name="Baldwin K."/>
            <person name="Lee J.-H."/>
            <person name="Diaz-Muniz I."/>
            <person name="Dosti B."/>
            <person name="Smeianov V."/>
            <person name="Wechter W."/>
            <person name="Barabote R."/>
            <person name="Lorca G."/>
            <person name="Altermann E."/>
            <person name="Barrangou R."/>
            <person name="Ganesan B."/>
            <person name="Xie Y."/>
            <person name="Rawsthorne H."/>
            <person name="Tamir D."/>
            <person name="Parker C."/>
            <person name="Breidt F."/>
            <person name="Broadbent J.R."/>
            <person name="Hutkins R."/>
            <person name="O'Sullivan D."/>
            <person name="Steele J."/>
            <person name="Unlu G."/>
            <person name="Saier M.H. Jr."/>
            <person name="Klaenhammer T."/>
            <person name="Richardson P."/>
            <person name="Kozyavkin S."/>
            <person name="Weimer B.C."/>
            <person name="Mills D.A."/>
        </authorList>
    </citation>
    <scope>NUCLEOTIDE SEQUENCE [LARGE SCALE GENOMIC DNA]</scope>
    <source>
        <strain>ATCC 334 / BCRC 17002 / CCUG 31169 / CIP 107868 / KCTC 3260 / NRRL B-441</strain>
    </source>
</reference>
<dbReference type="EC" id="3.6.5.3" evidence="2"/>
<dbReference type="EMBL" id="CP000423">
    <property type="protein sequence ID" value="ABJ70113.1"/>
    <property type="molecule type" value="Genomic_DNA"/>
</dbReference>
<dbReference type="RefSeq" id="WP_003565275.1">
    <property type="nucleotide sequence ID" value="NC_008526.1"/>
</dbReference>
<dbReference type="RefSeq" id="YP_806555.1">
    <property type="nucleotide sequence ID" value="NC_008526.1"/>
</dbReference>
<dbReference type="SMR" id="Q039K9"/>
<dbReference type="STRING" id="321967.LSEI_1332"/>
<dbReference type="PaxDb" id="321967-LSEI_1332"/>
<dbReference type="GeneID" id="57090004"/>
<dbReference type="KEGG" id="lca:LSEI_1332"/>
<dbReference type="PATRIC" id="fig|321967.11.peg.1311"/>
<dbReference type="HOGENOM" id="CLU_007265_0_1_9"/>
<dbReference type="Proteomes" id="UP000001651">
    <property type="component" value="Chromosome"/>
</dbReference>
<dbReference type="GO" id="GO:0005829">
    <property type="term" value="C:cytosol"/>
    <property type="evidence" value="ECO:0007669"/>
    <property type="project" value="TreeGrafter"/>
</dbReference>
<dbReference type="GO" id="GO:0005525">
    <property type="term" value="F:GTP binding"/>
    <property type="evidence" value="ECO:0007669"/>
    <property type="project" value="UniProtKB-UniRule"/>
</dbReference>
<dbReference type="GO" id="GO:0003924">
    <property type="term" value="F:GTPase activity"/>
    <property type="evidence" value="ECO:0007669"/>
    <property type="project" value="InterPro"/>
</dbReference>
<dbReference type="GO" id="GO:0003746">
    <property type="term" value="F:translation elongation factor activity"/>
    <property type="evidence" value="ECO:0007669"/>
    <property type="project" value="UniProtKB-UniRule"/>
</dbReference>
<dbReference type="CDD" id="cd01884">
    <property type="entry name" value="EF_Tu"/>
    <property type="match status" value="1"/>
</dbReference>
<dbReference type="CDD" id="cd03697">
    <property type="entry name" value="EFTU_II"/>
    <property type="match status" value="1"/>
</dbReference>
<dbReference type="CDD" id="cd03707">
    <property type="entry name" value="EFTU_III"/>
    <property type="match status" value="1"/>
</dbReference>
<dbReference type="FunFam" id="2.40.30.10:FF:000001">
    <property type="entry name" value="Elongation factor Tu"/>
    <property type="match status" value="1"/>
</dbReference>
<dbReference type="FunFam" id="3.40.50.300:FF:000003">
    <property type="entry name" value="Elongation factor Tu"/>
    <property type="match status" value="1"/>
</dbReference>
<dbReference type="Gene3D" id="3.40.50.300">
    <property type="entry name" value="P-loop containing nucleotide triphosphate hydrolases"/>
    <property type="match status" value="1"/>
</dbReference>
<dbReference type="Gene3D" id="2.40.30.10">
    <property type="entry name" value="Translation factors"/>
    <property type="match status" value="2"/>
</dbReference>
<dbReference type="HAMAP" id="MF_00118_B">
    <property type="entry name" value="EF_Tu_B"/>
    <property type="match status" value="1"/>
</dbReference>
<dbReference type="InterPro" id="IPR041709">
    <property type="entry name" value="EF-Tu_GTP-bd"/>
</dbReference>
<dbReference type="InterPro" id="IPR050055">
    <property type="entry name" value="EF-Tu_GTPase"/>
</dbReference>
<dbReference type="InterPro" id="IPR004161">
    <property type="entry name" value="EFTu-like_2"/>
</dbReference>
<dbReference type="InterPro" id="IPR033720">
    <property type="entry name" value="EFTU_2"/>
</dbReference>
<dbReference type="InterPro" id="IPR031157">
    <property type="entry name" value="G_TR_CS"/>
</dbReference>
<dbReference type="InterPro" id="IPR027417">
    <property type="entry name" value="P-loop_NTPase"/>
</dbReference>
<dbReference type="InterPro" id="IPR005225">
    <property type="entry name" value="Small_GTP-bd"/>
</dbReference>
<dbReference type="InterPro" id="IPR000795">
    <property type="entry name" value="T_Tr_GTP-bd_dom"/>
</dbReference>
<dbReference type="InterPro" id="IPR009000">
    <property type="entry name" value="Transl_B-barrel_sf"/>
</dbReference>
<dbReference type="InterPro" id="IPR009001">
    <property type="entry name" value="Transl_elong_EF1A/Init_IF2_C"/>
</dbReference>
<dbReference type="InterPro" id="IPR004541">
    <property type="entry name" value="Transl_elong_EFTu/EF1A_bac/org"/>
</dbReference>
<dbReference type="InterPro" id="IPR004160">
    <property type="entry name" value="Transl_elong_EFTu/EF1A_C"/>
</dbReference>
<dbReference type="NCBIfam" id="TIGR00485">
    <property type="entry name" value="EF-Tu"/>
    <property type="match status" value="1"/>
</dbReference>
<dbReference type="NCBIfam" id="NF000766">
    <property type="entry name" value="PRK00049.1"/>
    <property type="match status" value="1"/>
</dbReference>
<dbReference type="NCBIfam" id="NF009372">
    <property type="entry name" value="PRK12735.1"/>
    <property type="match status" value="1"/>
</dbReference>
<dbReference type="NCBIfam" id="NF009373">
    <property type="entry name" value="PRK12736.1"/>
    <property type="match status" value="1"/>
</dbReference>
<dbReference type="NCBIfam" id="TIGR00231">
    <property type="entry name" value="small_GTP"/>
    <property type="match status" value="1"/>
</dbReference>
<dbReference type="PANTHER" id="PTHR43721:SF22">
    <property type="entry name" value="ELONGATION FACTOR TU, MITOCHONDRIAL"/>
    <property type="match status" value="1"/>
</dbReference>
<dbReference type="PANTHER" id="PTHR43721">
    <property type="entry name" value="ELONGATION FACTOR TU-RELATED"/>
    <property type="match status" value="1"/>
</dbReference>
<dbReference type="Pfam" id="PF00009">
    <property type="entry name" value="GTP_EFTU"/>
    <property type="match status" value="1"/>
</dbReference>
<dbReference type="Pfam" id="PF03144">
    <property type="entry name" value="GTP_EFTU_D2"/>
    <property type="match status" value="1"/>
</dbReference>
<dbReference type="Pfam" id="PF03143">
    <property type="entry name" value="GTP_EFTU_D3"/>
    <property type="match status" value="1"/>
</dbReference>
<dbReference type="PRINTS" id="PR00315">
    <property type="entry name" value="ELONGATNFCT"/>
</dbReference>
<dbReference type="SUPFAM" id="SSF50465">
    <property type="entry name" value="EF-Tu/eEF-1alpha/eIF2-gamma C-terminal domain"/>
    <property type="match status" value="1"/>
</dbReference>
<dbReference type="SUPFAM" id="SSF52540">
    <property type="entry name" value="P-loop containing nucleoside triphosphate hydrolases"/>
    <property type="match status" value="1"/>
</dbReference>
<dbReference type="SUPFAM" id="SSF50447">
    <property type="entry name" value="Translation proteins"/>
    <property type="match status" value="1"/>
</dbReference>
<dbReference type="PROSITE" id="PS00301">
    <property type="entry name" value="G_TR_1"/>
    <property type="match status" value="1"/>
</dbReference>
<dbReference type="PROSITE" id="PS51722">
    <property type="entry name" value="G_TR_2"/>
    <property type="match status" value="1"/>
</dbReference>
<proteinExistence type="inferred from homology"/>
<comment type="function">
    <text evidence="2">GTP hydrolase that promotes the GTP-dependent binding of aminoacyl-tRNA to the A-site of ribosomes during protein biosynthesis.</text>
</comment>
<comment type="catalytic activity">
    <reaction evidence="2">
        <text>GTP + H2O = GDP + phosphate + H(+)</text>
        <dbReference type="Rhea" id="RHEA:19669"/>
        <dbReference type="ChEBI" id="CHEBI:15377"/>
        <dbReference type="ChEBI" id="CHEBI:15378"/>
        <dbReference type="ChEBI" id="CHEBI:37565"/>
        <dbReference type="ChEBI" id="CHEBI:43474"/>
        <dbReference type="ChEBI" id="CHEBI:58189"/>
        <dbReference type="EC" id="3.6.5.3"/>
    </reaction>
    <physiologicalReaction direction="left-to-right" evidence="2">
        <dbReference type="Rhea" id="RHEA:19670"/>
    </physiologicalReaction>
</comment>
<comment type="subunit">
    <text evidence="2">Monomer.</text>
</comment>
<comment type="subcellular location">
    <subcellularLocation>
        <location evidence="2">Cytoplasm</location>
    </subcellularLocation>
</comment>
<comment type="similarity">
    <text evidence="2">Belongs to the TRAFAC class translation factor GTPase superfamily. Classic translation factor GTPase family. EF-Tu/EF-1A subfamily.</text>
</comment>
<organism>
    <name type="scientific">Lacticaseibacillus paracasei (strain ATCC 334 / BCRC 17002 / CCUG 31169 / CIP 107868 / KCTC 3260 / NRRL B-441)</name>
    <name type="common">Lactobacillus paracasei</name>
    <dbReference type="NCBI Taxonomy" id="321967"/>
    <lineage>
        <taxon>Bacteria</taxon>
        <taxon>Bacillati</taxon>
        <taxon>Bacillota</taxon>
        <taxon>Bacilli</taxon>
        <taxon>Lactobacillales</taxon>
        <taxon>Lactobacillaceae</taxon>
        <taxon>Lacticaseibacillus</taxon>
    </lineage>
</organism>